<gene>
    <name evidence="1" type="primary">rpsE</name>
    <name type="ordered locus">MGAS2096_Spy0064</name>
</gene>
<sequence>MAFKDNAVELEERVVAINRVTKVVKGGRRLRFAALVVVGDGNGRVGFGTGKAQEVPEAIRKAVEAAKKNMIEVPMVGTTIPHEVYTNFGGAKVLLKPAVEGSGVAAGGAVRAVIELAGVADITSKSLGSNTPINIVRATVEGLKQLKRAEEVAALRGISVSDLA</sequence>
<comment type="function">
    <text evidence="1">With S4 and S12 plays an important role in translational accuracy.</text>
</comment>
<comment type="function">
    <text evidence="1">Located at the back of the 30S subunit body where it stabilizes the conformation of the head with respect to the body.</text>
</comment>
<comment type="subunit">
    <text evidence="1">Part of the 30S ribosomal subunit. Contacts proteins S4 and S8.</text>
</comment>
<comment type="domain">
    <text>The N-terminal domain interacts with the head of the 30S subunit; the C-terminal domain interacts with the body and contacts protein S4. The interaction surface between S4 and S5 is involved in control of translational fidelity.</text>
</comment>
<comment type="similarity">
    <text evidence="1">Belongs to the universal ribosomal protein uS5 family.</text>
</comment>
<accession>Q1JE42</accession>
<proteinExistence type="inferred from homology"/>
<feature type="chain" id="PRO_0000323207" description="Small ribosomal subunit protein uS5">
    <location>
        <begin position="1"/>
        <end position="164"/>
    </location>
</feature>
<feature type="domain" description="S5 DRBM" evidence="1">
    <location>
        <begin position="10"/>
        <end position="73"/>
    </location>
</feature>
<keyword id="KW-0687">Ribonucleoprotein</keyword>
<keyword id="KW-0689">Ribosomal protein</keyword>
<keyword id="KW-0694">RNA-binding</keyword>
<keyword id="KW-0699">rRNA-binding</keyword>
<name>RS5_STRPB</name>
<reference key="1">
    <citation type="journal article" date="2006" name="Proc. Natl. Acad. Sci. U.S.A.">
        <title>Molecular genetic anatomy of inter- and intraserotype variation in the human bacterial pathogen group A Streptococcus.</title>
        <authorList>
            <person name="Beres S.B."/>
            <person name="Richter E.W."/>
            <person name="Nagiec M.J."/>
            <person name="Sumby P."/>
            <person name="Porcella S.F."/>
            <person name="DeLeo F.R."/>
            <person name="Musser J.M."/>
        </authorList>
    </citation>
    <scope>NUCLEOTIDE SEQUENCE [LARGE SCALE GENOMIC DNA]</scope>
    <source>
        <strain>MGAS2096</strain>
    </source>
</reference>
<dbReference type="EMBL" id="CP000261">
    <property type="protein sequence ID" value="ABF35116.1"/>
    <property type="molecule type" value="Genomic_DNA"/>
</dbReference>
<dbReference type="SMR" id="Q1JE42"/>
<dbReference type="KEGG" id="spj:MGAS2096_Spy0064"/>
<dbReference type="HOGENOM" id="CLU_065898_2_2_9"/>
<dbReference type="GO" id="GO:0015935">
    <property type="term" value="C:small ribosomal subunit"/>
    <property type="evidence" value="ECO:0007669"/>
    <property type="project" value="InterPro"/>
</dbReference>
<dbReference type="GO" id="GO:0019843">
    <property type="term" value="F:rRNA binding"/>
    <property type="evidence" value="ECO:0007669"/>
    <property type="project" value="UniProtKB-UniRule"/>
</dbReference>
<dbReference type="GO" id="GO:0003735">
    <property type="term" value="F:structural constituent of ribosome"/>
    <property type="evidence" value="ECO:0007669"/>
    <property type="project" value="InterPro"/>
</dbReference>
<dbReference type="GO" id="GO:0006412">
    <property type="term" value="P:translation"/>
    <property type="evidence" value="ECO:0007669"/>
    <property type="project" value="UniProtKB-UniRule"/>
</dbReference>
<dbReference type="FunFam" id="3.30.160.20:FF:000001">
    <property type="entry name" value="30S ribosomal protein S5"/>
    <property type="match status" value="1"/>
</dbReference>
<dbReference type="FunFam" id="3.30.230.10:FF:000002">
    <property type="entry name" value="30S ribosomal protein S5"/>
    <property type="match status" value="1"/>
</dbReference>
<dbReference type="Gene3D" id="3.30.160.20">
    <property type="match status" value="1"/>
</dbReference>
<dbReference type="Gene3D" id="3.30.230.10">
    <property type="match status" value="1"/>
</dbReference>
<dbReference type="HAMAP" id="MF_01307_B">
    <property type="entry name" value="Ribosomal_uS5_B"/>
    <property type="match status" value="1"/>
</dbReference>
<dbReference type="InterPro" id="IPR020568">
    <property type="entry name" value="Ribosomal_Su5_D2-typ_SF"/>
</dbReference>
<dbReference type="InterPro" id="IPR000851">
    <property type="entry name" value="Ribosomal_uS5"/>
</dbReference>
<dbReference type="InterPro" id="IPR005712">
    <property type="entry name" value="Ribosomal_uS5_bac-type"/>
</dbReference>
<dbReference type="InterPro" id="IPR005324">
    <property type="entry name" value="Ribosomal_uS5_C"/>
</dbReference>
<dbReference type="InterPro" id="IPR013810">
    <property type="entry name" value="Ribosomal_uS5_N"/>
</dbReference>
<dbReference type="InterPro" id="IPR018192">
    <property type="entry name" value="Ribosomal_uS5_N_CS"/>
</dbReference>
<dbReference type="InterPro" id="IPR014721">
    <property type="entry name" value="Ribsml_uS5_D2-typ_fold_subgr"/>
</dbReference>
<dbReference type="NCBIfam" id="TIGR01021">
    <property type="entry name" value="rpsE_bact"/>
    <property type="match status" value="1"/>
</dbReference>
<dbReference type="PANTHER" id="PTHR48277">
    <property type="entry name" value="MITOCHONDRIAL RIBOSOMAL PROTEIN S5"/>
    <property type="match status" value="1"/>
</dbReference>
<dbReference type="PANTHER" id="PTHR48277:SF1">
    <property type="entry name" value="MITOCHONDRIAL RIBOSOMAL PROTEIN S5"/>
    <property type="match status" value="1"/>
</dbReference>
<dbReference type="Pfam" id="PF00333">
    <property type="entry name" value="Ribosomal_S5"/>
    <property type="match status" value="1"/>
</dbReference>
<dbReference type="Pfam" id="PF03719">
    <property type="entry name" value="Ribosomal_S5_C"/>
    <property type="match status" value="1"/>
</dbReference>
<dbReference type="SUPFAM" id="SSF54768">
    <property type="entry name" value="dsRNA-binding domain-like"/>
    <property type="match status" value="1"/>
</dbReference>
<dbReference type="SUPFAM" id="SSF54211">
    <property type="entry name" value="Ribosomal protein S5 domain 2-like"/>
    <property type="match status" value="1"/>
</dbReference>
<dbReference type="PROSITE" id="PS00585">
    <property type="entry name" value="RIBOSOMAL_S5"/>
    <property type="match status" value="1"/>
</dbReference>
<dbReference type="PROSITE" id="PS50881">
    <property type="entry name" value="S5_DSRBD"/>
    <property type="match status" value="1"/>
</dbReference>
<protein>
    <recommendedName>
        <fullName evidence="1">Small ribosomal subunit protein uS5</fullName>
    </recommendedName>
    <alternativeName>
        <fullName evidence="2">30S ribosomal protein S5</fullName>
    </alternativeName>
</protein>
<evidence type="ECO:0000255" key="1">
    <source>
        <dbReference type="HAMAP-Rule" id="MF_01307"/>
    </source>
</evidence>
<evidence type="ECO:0000305" key="2"/>
<organism>
    <name type="scientific">Streptococcus pyogenes serotype M12 (strain MGAS2096)</name>
    <dbReference type="NCBI Taxonomy" id="370553"/>
    <lineage>
        <taxon>Bacteria</taxon>
        <taxon>Bacillati</taxon>
        <taxon>Bacillota</taxon>
        <taxon>Bacilli</taxon>
        <taxon>Lactobacillales</taxon>
        <taxon>Streptococcaceae</taxon>
        <taxon>Streptococcus</taxon>
    </lineage>
</organism>